<gene>
    <name evidence="1" type="primary">petN</name>
</gene>
<proteinExistence type="inferred from homology"/>
<organism>
    <name type="scientific">Piper cenocladum</name>
    <name type="common">Ant piper</name>
    <dbReference type="NCBI Taxonomy" id="398741"/>
    <lineage>
        <taxon>Eukaryota</taxon>
        <taxon>Viridiplantae</taxon>
        <taxon>Streptophyta</taxon>
        <taxon>Embryophyta</taxon>
        <taxon>Tracheophyta</taxon>
        <taxon>Spermatophyta</taxon>
        <taxon>Magnoliopsida</taxon>
        <taxon>Magnoliidae</taxon>
        <taxon>Piperales</taxon>
        <taxon>Piperaceae</taxon>
        <taxon>Piper</taxon>
    </lineage>
</organism>
<reference key="1">
    <citation type="journal article" date="2006" name="BMC Evol. Biol.">
        <title>Complete plastid genome sequences of Drimys, Liriodendron, and Piper: implications for the phylogenetic relationships of magnoliids.</title>
        <authorList>
            <person name="Cai Z."/>
            <person name="Penaflor C."/>
            <person name="Kuehl J.V."/>
            <person name="Leebens-Mack J."/>
            <person name="Carlson J.E."/>
            <person name="dePamphilis C.W."/>
            <person name="Boore J.L."/>
            <person name="Jansen R.K."/>
        </authorList>
    </citation>
    <scope>NUCLEOTIDE SEQUENCE [LARGE SCALE GENOMIC DNA]</scope>
</reference>
<geneLocation type="chloroplast"/>
<protein>
    <recommendedName>
        <fullName evidence="1">Cytochrome b6-f complex subunit 8</fullName>
    </recommendedName>
    <alternativeName>
        <fullName evidence="1">Cytochrome b6-f complex subunit PetN</fullName>
    </alternativeName>
    <alternativeName>
        <fullName evidence="1">Cytochrome b6-f complex subunit VIII</fullName>
    </alternativeName>
</protein>
<dbReference type="EMBL" id="DQ887677">
    <property type="protein sequence ID" value="ABI14465.1"/>
    <property type="molecule type" value="Genomic_DNA"/>
</dbReference>
<dbReference type="RefSeq" id="YP_784466.1">
    <property type="nucleotide sequence ID" value="NC_008457.1"/>
</dbReference>
<dbReference type="SMR" id="Q06GR7"/>
<dbReference type="GeneID" id="4363715"/>
<dbReference type="GO" id="GO:0009535">
    <property type="term" value="C:chloroplast thylakoid membrane"/>
    <property type="evidence" value="ECO:0007669"/>
    <property type="project" value="UniProtKB-SubCell"/>
</dbReference>
<dbReference type="GO" id="GO:0009512">
    <property type="term" value="C:cytochrome b6f complex"/>
    <property type="evidence" value="ECO:0007669"/>
    <property type="project" value="InterPro"/>
</dbReference>
<dbReference type="GO" id="GO:0045158">
    <property type="term" value="F:electron transporter, transferring electrons within cytochrome b6/f complex of photosystem II activity"/>
    <property type="evidence" value="ECO:0007669"/>
    <property type="project" value="InterPro"/>
</dbReference>
<dbReference type="GO" id="GO:0017004">
    <property type="term" value="P:cytochrome complex assembly"/>
    <property type="evidence" value="ECO:0007669"/>
    <property type="project" value="UniProtKB-UniRule"/>
</dbReference>
<dbReference type="GO" id="GO:0015979">
    <property type="term" value="P:photosynthesis"/>
    <property type="evidence" value="ECO:0007669"/>
    <property type="project" value="UniProtKB-KW"/>
</dbReference>
<dbReference type="HAMAP" id="MF_00395">
    <property type="entry name" value="Cytb6_f_PetN"/>
    <property type="match status" value="1"/>
</dbReference>
<dbReference type="InterPro" id="IPR036143">
    <property type="entry name" value="Cytochr_b6-f_cplx_su8_sf"/>
</dbReference>
<dbReference type="InterPro" id="IPR005497">
    <property type="entry name" value="Cytochrome_b6-f_cplx_su8"/>
</dbReference>
<dbReference type="Pfam" id="PF03742">
    <property type="entry name" value="PetN"/>
    <property type="match status" value="1"/>
</dbReference>
<dbReference type="SUPFAM" id="SSF103451">
    <property type="entry name" value="PetN subunit of the cytochrome b6f complex"/>
    <property type="match status" value="1"/>
</dbReference>
<accession>Q06GR7</accession>
<evidence type="ECO:0000255" key="1">
    <source>
        <dbReference type="HAMAP-Rule" id="MF_00395"/>
    </source>
</evidence>
<name>PETN_PIPCE</name>
<feature type="chain" id="PRO_0000275562" description="Cytochrome b6-f complex subunit 8">
    <location>
        <begin position="1"/>
        <end position="29"/>
    </location>
</feature>
<feature type="transmembrane region" description="Helical" evidence="1">
    <location>
        <begin position="3"/>
        <end position="23"/>
    </location>
</feature>
<comment type="function">
    <text evidence="1">Component of the cytochrome b6-f complex, which mediates electron transfer between photosystem II (PSII) and photosystem I (PSI), cyclic electron flow around PSI, and state transitions.</text>
</comment>
<comment type="subunit">
    <text evidence="1">The 4 large subunits of the cytochrome b6-f complex are cytochrome b6, subunit IV (17 kDa polypeptide, PetD), cytochrome f and the Rieske protein, while the 4 small subunits are PetG, PetL, PetM and PetN. The complex functions as a dimer.</text>
</comment>
<comment type="subcellular location">
    <subcellularLocation>
        <location>Plastid</location>
        <location>Chloroplast thylakoid membrane</location>
        <topology>Single-pass membrane protein</topology>
    </subcellularLocation>
</comment>
<comment type="similarity">
    <text evidence="1">Belongs to the PetN family.</text>
</comment>
<keyword id="KW-0150">Chloroplast</keyword>
<keyword id="KW-0249">Electron transport</keyword>
<keyword id="KW-0472">Membrane</keyword>
<keyword id="KW-0602">Photosynthesis</keyword>
<keyword id="KW-0934">Plastid</keyword>
<keyword id="KW-0793">Thylakoid</keyword>
<keyword id="KW-0812">Transmembrane</keyword>
<keyword id="KW-1133">Transmembrane helix</keyword>
<keyword id="KW-0813">Transport</keyword>
<sequence length="29" mass="3170">MDIVSLAWAALMVVFTFSLSLVVWGRSGL</sequence>